<sequence length="445" mass="44602">MGRLFGTDGVRGLANSDLTADLALRLAVAAASVLTAGTSDARPTAVIGRDPRASGEMLQAAVTAGLSSAGVDVLDVGILPTPAVAYLTAKLEASLGVMISASHNPMPDNGIKIFAAGGHKLDDAVEVAIEDALDGTAPPVLPTGAGIGRVRAVDDAAQLYLAHLASAASEPLAGLTVVVDCANGAASALAPVAYAAAGARVIAISADPDGLNINDGCGSTHLENLQKAVVDHGADLGLAHDGDADRCLAVDETGAVVDGDAIMAVLAIAMNEAGELVENTLVATVMSNLGLHIAMREAGINIVTAAVGDRYVLEELRAGGYSLGGEQSGHVVLPAFGTTGDGILTGLRLLGRMARTRKSASVLAATMTTLPQVLINVKVGDKAAVAASPSVLAAVADAERVLGDGGRVLLRPSGTEQLVRVMVEATELPLAQKLADELAEIVGSV</sequence>
<organism>
    <name type="scientific">Rhodococcus erythropolis (strain PR4 / NBRC 100887)</name>
    <dbReference type="NCBI Taxonomy" id="234621"/>
    <lineage>
        <taxon>Bacteria</taxon>
        <taxon>Bacillati</taxon>
        <taxon>Actinomycetota</taxon>
        <taxon>Actinomycetes</taxon>
        <taxon>Mycobacteriales</taxon>
        <taxon>Nocardiaceae</taxon>
        <taxon>Rhodococcus</taxon>
        <taxon>Rhodococcus erythropolis group</taxon>
    </lineage>
</organism>
<gene>
    <name evidence="1" type="primary">glmM</name>
    <name type="ordered locus">RER_19060</name>
</gene>
<dbReference type="EC" id="5.4.2.10" evidence="1"/>
<dbReference type="EMBL" id="AP008957">
    <property type="protein sequence ID" value="BAH32614.1"/>
    <property type="molecule type" value="Genomic_DNA"/>
</dbReference>
<dbReference type="RefSeq" id="WP_020906918.1">
    <property type="nucleotide sequence ID" value="NC_012490.1"/>
</dbReference>
<dbReference type="SMR" id="C0ZW79"/>
<dbReference type="KEGG" id="rer:RER_19060"/>
<dbReference type="eggNOG" id="COG1109">
    <property type="taxonomic scope" value="Bacteria"/>
</dbReference>
<dbReference type="HOGENOM" id="CLU_016950_7_0_11"/>
<dbReference type="Proteomes" id="UP000002204">
    <property type="component" value="Chromosome"/>
</dbReference>
<dbReference type="GO" id="GO:0005829">
    <property type="term" value="C:cytosol"/>
    <property type="evidence" value="ECO:0007669"/>
    <property type="project" value="TreeGrafter"/>
</dbReference>
<dbReference type="GO" id="GO:0000287">
    <property type="term" value="F:magnesium ion binding"/>
    <property type="evidence" value="ECO:0007669"/>
    <property type="project" value="UniProtKB-UniRule"/>
</dbReference>
<dbReference type="GO" id="GO:0008966">
    <property type="term" value="F:phosphoglucosamine mutase activity"/>
    <property type="evidence" value="ECO:0007669"/>
    <property type="project" value="UniProtKB-UniRule"/>
</dbReference>
<dbReference type="GO" id="GO:0004615">
    <property type="term" value="F:phosphomannomutase activity"/>
    <property type="evidence" value="ECO:0007669"/>
    <property type="project" value="TreeGrafter"/>
</dbReference>
<dbReference type="GO" id="GO:0005975">
    <property type="term" value="P:carbohydrate metabolic process"/>
    <property type="evidence" value="ECO:0007669"/>
    <property type="project" value="InterPro"/>
</dbReference>
<dbReference type="GO" id="GO:0009252">
    <property type="term" value="P:peptidoglycan biosynthetic process"/>
    <property type="evidence" value="ECO:0007669"/>
    <property type="project" value="TreeGrafter"/>
</dbReference>
<dbReference type="GO" id="GO:0006048">
    <property type="term" value="P:UDP-N-acetylglucosamine biosynthetic process"/>
    <property type="evidence" value="ECO:0007669"/>
    <property type="project" value="TreeGrafter"/>
</dbReference>
<dbReference type="CDD" id="cd05802">
    <property type="entry name" value="GlmM"/>
    <property type="match status" value="1"/>
</dbReference>
<dbReference type="FunFam" id="3.30.310.50:FF:000001">
    <property type="entry name" value="Phosphoglucosamine mutase"/>
    <property type="match status" value="1"/>
</dbReference>
<dbReference type="FunFam" id="3.40.120.10:FF:000001">
    <property type="entry name" value="Phosphoglucosamine mutase"/>
    <property type="match status" value="1"/>
</dbReference>
<dbReference type="FunFam" id="3.40.120.10:FF:000002">
    <property type="entry name" value="Phosphoglucosamine mutase"/>
    <property type="match status" value="1"/>
</dbReference>
<dbReference type="Gene3D" id="3.40.120.10">
    <property type="entry name" value="Alpha-D-Glucose-1,6-Bisphosphate, subunit A, domain 3"/>
    <property type="match status" value="3"/>
</dbReference>
<dbReference type="Gene3D" id="3.30.310.50">
    <property type="entry name" value="Alpha-D-phosphohexomutase, C-terminal domain"/>
    <property type="match status" value="1"/>
</dbReference>
<dbReference type="HAMAP" id="MF_01554_B">
    <property type="entry name" value="GlmM_B"/>
    <property type="match status" value="1"/>
</dbReference>
<dbReference type="InterPro" id="IPR005844">
    <property type="entry name" value="A-D-PHexomutase_a/b/a-I"/>
</dbReference>
<dbReference type="InterPro" id="IPR016055">
    <property type="entry name" value="A-D-PHexomutase_a/b/a-I/II/III"/>
</dbReference>
<dbReference type="InterPro" id="IPR005845">
    <property type="entry name" value="A-D-PHexomutase_a/b/a-II"/>
</dbReference>
<dbReference type="InterPro" id="IPR005846">
    <property type="entry name" value="A-D-PHexomutase_a/b/a-III"/>
</dbReference>
<dbReference type="InterPro" id="IPR005843">
    <property type="entry name" value="A-D-PHexomutase_C"/>
</dbReference>
<dbReference type="InterPro" id="IPR036900">
    <property type="entry name" value="A-D-PHexomutase_C_sf"/>
</dbReference>
<dbReference type="InterPro" id="IPR016066">
    <property type="entry name" value="A-D-PHexomutase_CS"/>
</dbReference>
<dbReference type="InterPro" id="IPR005841">
    <property type="entry name" value="Alpha-D-phosphohexomutase_SF"/>
</dbReference>
<dbReference type="InterPro" id="IPR006352">
    <property type="entry name" value="GlmM_bact"/>
</dbReference>
<dbReference type="InterPro" id="IPR050060">
    <property type="entry name" value="Phosphoglucosamine_mutase"/>
</dbReference>
<dbReference type="NCBIfam" id="TIGR01455">
    <property type="entry name" value="glmM"/>
    <property type="match status" value="1"/>
</dbReference>
<dbReference type="PANTHER" id="PTHR42946:SF1">
    <property type="entry name" value="PHOSPHOGLUCOMUTASE (ALPHA-D-GLUCOSE-1,6-BISPHOSPHATE-DEPENDENT)"/>
    <property type="match status" value="1"/>
</dbReference>
<dbReference type="PANTHER" id="PTHR42946">
    <property type="entry name" value="PHOSPHOHEXOSE MUTASE"/>
    <property type="match status" value="1"/>
</dbReference>
<dbReference type="Pfam" id="PF02878">
    <property type="entry name" value="PGM_PMM_I"/>
    <property type="match status" value="1"/>
</dbReference>
<dbReference type="Pfam" id="PF02879">
    <property type="entry name" value="PGM_PMM_II"/>
    <property type="match status" value="1"/>
</dbReference>
<dbReference type="Pfam" id="PF02880">
    <property type="entry name" value="PGM_PMM_III"/>
    <property type="match status" value="1"/>
</dbReference>
<dbReference type="Pfam" id="PF00408">
    <property type="entry name" value="PGM_PMM_IV"/>
    <property type="match status" value="1"/>
</dbReference>
<dbReference type="PRINTS" id="PR00509">
    <property type="entry name" value="PGMPMM"/>
</dbReference>
<dbReference type="SUPFAM" id="SSF55957">
    <property type="entry name" value="Phosphoglucomutase, C-terminal domain"/>
    <property type="match status" value="1"/>
</dbReference>
<dbReference type="SUPFAM" id="SSF53738">
    <property type="entry name" value="Phosphoglucomutase, first 3 domains"/>
    <property type="match status" value="3"/>
</dbReference>
<dbReference type="PROSITE" id="PS00710">
    <property type="entry name" value="PGM_PMM"/>
    <property type="match status" value="1"/>
</dbReference>
<comment type="function">
    <text evidence="1">Catalyzes the conversion of glucosamine-6-phosphate to glucosamine-1-phosphate.</text>
</comment>
<comment type="catalytic activity">
    <reaction evidence="1">
        <text>alpha-D-glucosamine 1-phosphate = D-glucosamine 6-phosphate</text>
        <dbReference type="Rhea" id="RHEA:23424"/>
        <dbReference type="ChEBI" id="CHEBI:58516"/>
        <dbReference type="ChEBI" id="CHEBI:58725"/>
        <dbReference type="EC" id="5.4.2.10"/>
    </reaction>
</comment>
<comment type="cofactor">
    <cofactor evidence="1">
        <name>Mg(2+)</name>
        <dbReference type="ChEBI" id="CHEBI:18420"/>
    </cofactor>
    <text evidence="1">Binds 1 Mg(2+) ion per subunit.</text>
</comment>
<comment type="PTM">
    <text evidence="1">Activated by phosphorylation.</text>
</comment>
<comment type="similarity">
    <text evidence="1">Belongs to the phosphohexose mutase family.</text>
</comment>
<reference key="1">
    <citation type="submission" date="2005-03" db="EMBL/GenBank/DDBJ databases">
        <title>Comparison of the complete genome sequences of Rhodococcus erythropolis PR4 and Rhodococcus opacus B4.</title>
        <authorList>
            <person name="Takarada H."/>
            <person name="Sekine M."/>
            <person name="Hosoyama A."/>
            <person name="Yamada R."/>
            <person name="Fujisawa T."/>
            <person name="Omata S."/>
            <person name="Shimizu A."/>
            <person name="Tsukatani N."/>
            <person name="Tanikawa S."/>
            <person name="Fujita N."/>
            <person name="Harayama S."/>
        </authorList>
    </citation>
    <scope>NUCLEOTIDE SEQUENCE [LARGE SCALE GENOMIC DNA]</scope>
    <source>
        <strain>PR4 / NBRC 100887</strain>
    </source>
</reference>
<keyword id="KW-0413">Isomerase</keyword>
<keyword id="KW-0460">Magnesium</keyword>
<keyword id="KW-0479">Metal-binding</keyword>
<keyword id="KW-0597">Phosphoprotein</keyword>
<proteinExistence type="inferred from homology"/>
<evidence type="ECO:0000255" key="1">
    <source>
        <dbReference type="HAMAP-Rule" id="MF_01554"/>
    </source>
</evidence>
<feature type="chain" id="PRO_1000215496" description="Phosphoglucosamine mutase">
    <location>
        <begin position="1"/>
        <end position="445"/>
    </location>
</feature>
<feature type="active site" description="Phosphoserine intermediate" evidence="1">
    <location>
        <position position="102"/>
    </location>
</feature>
<feature type="binding site" description="via phosphate group" evidence="1">
    <location>
        <position position="102"/>
    </location>
    <ligand>
        <name>Mg(2+)</name>
        <dbReference type="ChEBI" id="CHEBI:18420"/>
    </ligand>
</feature>
<feature type="binding site" evidence="1">
    <location>
        <position position="241"/>
    </location>
    <ligand>
        <name>Mg(2+)</name>
        <dbReference type="ChEBI" id="CHEBI:18420"/>
    </ligand>
</feature>
<feature type="binding site" evidence="1">
    <location>
        <position position="243"/>
    </location>
    <ligand>
        <name>Mg(2+)</name>
        <dbReference type="ChEBI" id="CHEBI:18420"/>
    </ligand>
</feature>
<feature type="binding site" evidence="1">
    <location>
        <position position="245"/>
    </location>
    <ligand>
        <name>Mg(2+)</name>
        <dbReference type="ChEBI" id="CHEBI:18420"/>
    </ligand>
</feature>
<feature type="modified residue" description="Phosphoserine" evidence="1">
    <location>
        <position position="102"/>
    </location>
</feature>
<accession>C0ZW79</accession>
<name>GLMM_RHOE4</name>
<protein>
    <recommendedName>
        <fullName evidence="1">Phosphoglucosamine mutase</fullName>
        <ecNumber evidence="1">5.4.2.10</ecNumber>
    </recommendedName>
</protein>